<gene>
    <name evidence="1" type="primary">ispE</name>
    <name type="ordered locus">CLM_0164</name>
</gene>
<dbReference type="EC" id="2.7.1.148" evidence="1"/>
<dbReference type="EMBL" id="CP001581">
    <property type="protein sequence ID" value="ACO87034.1"/>
    <property type="molecule type" value="Genomic_DNA"/>
</dbReference>
<dbReference type="RefSeq" id="WP_003356533.1">
    <property type="nucleotide sequence ID" value="NC_012563.1"/>
</dbReference>
<dbReference type="SMR" id="C1FQ79"/>
<dbReference type="KEGG" id="cby:CLM_0164"/>
<dbReference type="eggNOG" id="COG1947">
    <property type="taxonomic scope" value="Bacteria"/>
</dbReference>
<dbReference type="HOGENOM" id="CLU_053057_1_1_9"/>
<dbReference type="UniPathway" id="UPA00056">
    <property type="reaction ID" value="UER00094"/>
</dbReference>
<dbReference type="Proteomes" id="UP000001374">
    <property type="component" value="Chromosome"/>
</dbReference>
<dbReference type="GO" id="GO:0050515">
    <property type="term" value="F:4-(cytidine 5'-diphospho)-2-C-methyl-D-erythritol kinase activity"/>
    <property type="evidence" value="ECO:0007669"/>
    <property type="project" value="UniProtKB-UniRule"/>
</dbReference>
<dbReference type="GO" id="GO:0005524">
    <property type="term" value="F:ATP binding"/>
    <property type="evidence" value="ECO:0007669"/>
    <property type="project" value="UniProtKB-UniRule"/>
</dbReference>
<dbReference type="GO" id="GO:0019288">
    <property type="term" value="P:isopentenyl diphosphate biosynthetic process, methylerythritol 4-phosphate pathway"/>
    <property type="evidence" value="ECO:0007669"/>
    <property type="project" value="UniProtKB-UniRule"/>
</dbReference>
<dbReference type="GO" id="GO:0016114">
    <property type="term" value="P:terpenoid biosynthetic process"/>
    <property type="evidence" value="ECO:0007669"/>
    <property type="project" value="InterPro"/>
</dbReference>
<dbReference type="FunFam" id="3.30.230.10:FF:000029">
    <property type="entry name" value="4-diphosphocytidyl-2-C-methyl-D-erythritol kinase"/>
    <property type="match status" value="1"/>
</dbReference>
<dbReference type="Gene3D" id="3.30.230.10">
    <property type="match status" value="1"/>
</dbReference>
<dbReference type="Gene3D" id="3.30.70.890">
    <property type="entry name" value="GHMP kinase, C-terminal domain"/>
    <property type="match status" value="1"/>
</dbReference>
<dbReference type="HAMAP" id="MF_00061">
    <property type="entry name" value="IspE"/>
    <property type="match status" value="1"/>
</dbReference>
<dbReference type="InterPro" id="IPR013750">
    <property type="entry name" value="GHMP_kinase_C_dom"/>
</dbReference>
<dbReference type="InterPro" id="IPR036554">
    <property type="entry name" value="GHMP_kinase_C_sf"/>
</dbReference>
<dbReference type="InterPro" id="IPR006204">
    <property type="entry name" value="GHMP_kinase_N_dom"/>
</dbReference>
<dbReference type="InterPro" id="IPR004424">
    <property type="entry name" value="IspE"/>
</dbReference>
<dbReference type="InterPro" id="IPR020568">
    <property type="entry name" value="Ribosomal_Su5_D2-typ_SF"/>
</dbReference>
<dbReference type="InterPro" id="IPR014721">
    <property type="entry name" value="Ribsml_uS5_D2-typ_fold_subgr"/>
</dbReference>
<dbReference type="NCBIfam" id="TIGR00154">
    <property type="entry name" value="ispE"/>
    <property type="match status" value="1"/>
</dbReference>
<dbReference type="PANTHER" id="PTHR43527">
    <property type="entry name" value="4-DIPHOSPHOCYTIDYL-2-C-METHYL-D-ERYTHRITOL KINASE, CHLOROPLASTIC"/>
    <property type="match status" value="1"/>
</dbReference>
<dbReference type="PANTHER" id="PTHR43527:SF2">
    <property type="entry name" value="4-DIPHOSPHOCYTIDYL-2-C-METHYL-D-ERYTHRITOL KINASE, CHLOROPLASTIC"/>
    <property type="match status" value="1"/>
</dbReference>
<dbReference type="Pfam" id="PF08544">
    <property type="entry name" value="GHMP_kinases_C"/>
    <property type="match status" value="1"/>
</dbReference>
<dbReference type="Pfam" id="PF00288">
    <property type="entry name" value="GHMP_kinases_N"/>
    <property type="match status" value="1"/>
</dbReference>
<dbReference type="PIRSF" id="PIRSF010376">
    <property type="entry name" value="IspE"/>
    <property type="match status" value="1"/>
</dbReference>
<dbReference type="SUPFAM" id="SSF55060">
    <property type="entry name" value="GHMP Kinase, C-terminal domain"/>
    <property type="match status" value="1"/>
</dbReference>
<dbReference type="SUPFAM" id="SSF54211">
    <property type="entry name" value="Ribosomal protein S5 domain 2-like"/>
    <property type="match status" value="1"/>
</dbReference>
<organism>
    <name type="scientific">Clostridium botulinum (strain Kyoto / Type A2)</name>
    <dbReference type="NCBI Taxonomy" id="536232"/>
    <lineage>
        <taxon>Bacteria</taxon>
        <taxon>Bacillati</taxon>
        <taxon>Bacillota</taxon>
        <taxon>Clostridia</taxon>
        <taxon>Eubacteriales</taxon>
        <taxon>Clostridiaceae</taxon>
        <taxon>Clostridium</taxon>
    </lineage>
</organism>
<proteinExistence type="inferred from homology"/>
<evidence type="ECO:0000255" key="1">
    <source>
        <dbReference type="HAMAP-Rule" id="MF_00061"/>
    </source>
</evidence>
<comment type="function">
    <text evidence="1">Catalyzes the phosphorylation of the position 2 hydroxy group of 4-diphosphocytidyl-2C-methyl-D-erythritol.</text>
</comment>
<comment type="catalytic activity">
    <reaction evidence="1">
        <text>4-CDP-2-C-methyl-D-erythritol + ATP = 4-CDP-2-C-methyl-D-erythritol 2-phosphate + ADP + H(+)</text>
        <dbReference type="Rhea" id="RHEA:18437"/>
        <dbReference type="ChEBI" id="CHEBI:15378"/>
        <dbReference type="ChEBI" id="CHEBI:30616"/>
        <dbReference type="ChEBI" id="CHEBI:57823"/>
        <dbReference type="ChEBI" id="CHEBI:57919"/>
        <dbReference type="ChEBI" id="CHEBI:456216"/>
        <dbReference type="EC" id="2.7.1.148"/>
    </reaction>
</comment>
<comment type="pathway">
    <text evidence="1">Isoprenoid biosynthesis; isopentenyl diphosphate biosynthesis via DXP pathway; isopentenyl diphosphate from 1-deoxy-D-xylulose 5-phosphate: step 3/6.</text>
</comment>
<comment type="similarity">
    <text evidence="1">Belongs to the GHMP kinase family. IspE subfamily.</text>
</comment>
<name>ISPE_CLOBJ</name>
<protein>
    <recommendedName>
        <fullName evidence="1">4-diphosphocytidyl-2-C-methyl-D-erythritol kinase</fullName>
        <shortName evidence="1">CMK</shortName>
        <ecNumber evidence="1">2.7.1.148</ecNumber>
    </recommendedName>
    <alternativeName>
        <fullName evidence="1">4-(cytidine-5'-diphospho)-2-C-methyl-D-erythritol kinase</fullName>
    </alternativeName>
</protein>
<sequence>MLSKAHAKVNLSLDVIGKRKDGYHLLKMLMQTIDLYDLIEIKKIKKGIIIDCDREYIPKDRRNLAYKAAELFLDRYNIDSGVRIDITKNIPVAAGLAGGSTDAATVLKIMRDIFRPDISNEELKEIALDIGADVPFCIEGGTALCEGIGEKITPIKNFKNQILVLVKPNFGLSTKDVYNNLKVEKIYIHPNTTKLIQSIEEDNLKSVARNMRNVLENVTLRKYKALNSIKSNFIELGALGSMMSGSGPSVFGLFDDMLKAQICYDNMKEKYKEVFITRTI</sequence>
<feature type="chain" id="PRO_1000190681" description="4-diphosphocytidyl-2-C-methyl-D-erythritol kinase">
    <location>
        <begin position="1"/>
        <end position="280"/>
    </location>
</feature>
<feature type="active site" evidence="1">
    <location>
        <position position="8"/>
    </location>
</feature>
<feature type="active site" evidence="1">
    <location>
        <position position="133"/>
    </location>
</feature>
<feature type="binding site" evidence="1">
    <location>
        <begin position="91"/>
        <end position="101"/>
    </location>
    <ligand>
        <name>ATP</name>
        <dbReference type="ChEBI" id="CHEBI:30616"/>
    </ligand>
</feature>
<keyword id="KW-0067">ATP-binding</keyword>
<keyword id="KW-0414">Isoprene biosynthesis</keyword>
<keyword id="KW-0418">Kinase</keyword>
<keyword id="KW-0547">Nucleotide-binding</keyword>
<keyword id="KW-0808">Transferase</keyword>
<accession>C1FQ79</accession>
<reference key="1">
    <citation type="submission" date="2008-10" db="EMBL/GenBank/DDBJ databases">
        <title>Genome sequence of Clostridium botulinum A2 Kyoto.</title>
        <authorList>
            <person name="Shrivastava S."/>
            <person name="Brinkac L.M."/>
            <person name="Brown J.L."/>
            <person name="Bruce D."/>
            <person name="Detter C.C."/>
            <person name="Johnson E.A."/>
            <person name="Munk C.A."/>
            <person name="Smith L.A."/>
            <person name="Smith T.J."/>
            <person name="Sutton G."/>
            <person name="Brettin T.S."/>
        </authorList>
    </citation>
    <scope>NUCLEOTIDE SEQUENCE [LARGE SCALE GENOMIC DNA]</scope>
    <source>
        <strain>Kyoto / Type A2</strain>
    </source>
</reference>